<feature type="chain" id="PRO_0000006358" description="Dopamine beta-hydroxylase">
    <location>
        <begin position="1"/>
        <end position="620"/>
    </location>
</feature>
<feature type="chain" id="PRO_0000308211" description="Soluble dopamine beta-hydroxylase" evidence="3">
    <location>
        <begin position="43"/>
        <end position="620"/>
    </location>
</feature>
<feature type="topological domain" description="Cytoplasmic" evidence="3">
    <location>
        <begin position="1"/>
        <end position="19"/>
    </location>
</feature>
<feature type="transmembrane region" description="Helical; Signal-anchor for type II membrane protein" evidence="3">
    <location>
        <begin position="20"/>
        <end position="40"/>
    </location>
</feature>
<feature type="topological domain" description="Intragranular" evidence="3">
    <location>
        <begin position="41"/>
        <end position="620"/>
    </location>
</feature>
<feature type="domain" description="DOMON" evidence="4">
    <location>
        <begin position="60"/>
        <end position="176"/>
    </location>
</feature>
<feature type="active site" evidence="3">
    <location>
        <position position="233"/>
    </location>
</feature>
<feature type="active site" evidence="3">
    <location>
        <position position="415"/>
    </location>
</feature>
<feature type="binding site" evidence="1">
    <location>
        <position position="265"/>
    </location>
    <ligand>
        <name>Cu(2+)</name>
        <dbReference type="ChEBI" id="CHEBI:29036"/>
        <label>A</label>
    </ligand>
</feature>
<feature type="binding site" evidence="1">
    <location>
        <position position="266"/>
    </location>
    <ligand>
        <name>Cu(2+)</name>
        <dbReference type="ChEBI" id="CHEBI:29036"/>
        <label>A</label>
    </ligand>
</feature>
<feature type="binding site" evidence="1">
    <location>
        <position position="336"/>
    </location>
    <ligand>
        <name>Cu(2+)</name>
        <dbReference type="ChEBI" id="CHEBI:29036"/>
        <label>A</label>
    </ligand>
</feature>
<feature type="binding site" evidence="1">
    <location>
        <position position="415"/>
    </location>
    <ligand>
        <name>Cu(2+)</name>
        <dbReference type="ChEBI" id="CHEBI:29036"/>
        <label>B</label>
    </ligand>
</feature>
<feature type="binding site" evidence="1">
    <location>
        <position position="417"/>
    </location>
    <ligand>
        <name>Cu(2+)</name>
        <dbReference type="ChEBI" id="CHEBI:29036"/>
        <label>B</label>
    </ligand>
</feature>
<feature type="binding site" evidence="1">
    <location>
        <position position="490"/>
    </location>
    <ligand>
        <name>Cu(2+)</name>
        <dbReference type="ChEBI" id="CHEBI:29036"/>
        <label>B</label>
    </ligand>
</feature>
<feature type="site" description="Cleavage" evidence="2">
    <location>
        <begin position="42"/>
        <end position="43"/>
    </location>
</feature>
<feature type="modified residue" description="Phosphoserine; by CaMK" evidence="3">
    <location>
        <position position="349"/>
    </location>
</feature>
<feature type="glycosylation site" description="N-linked (GlcNAc...) asparagine" evidence="3">
    <location>
        <position position="67"/>
    </location>
</feature>
<feature type="glycosylation site" description="N-linked (GlcNAc...) asparagine" evidence="3">
    <location>
        <position position="187"/>
    </location>
</feature>
<feature type="glycosylation site" description="N-linked (GlcNAc...) asparagine" evidence="3">
    <location>
        <position position="274"/>
    </location>
</feature>
<feature type="glycosylation site" description="N-linked (GlcNAc...) asparagine" evidence="3">
    <location>
        <position position="475"/>
    </location>
</feature>
<feature type="glycosylation site" description="N-linked (GlcNAc...) asparagine" evidence="3">
    <location>
        <position position="569"/>
    </location>
</feature>
<feature type="glycosylation site" description="N-linked (GlcNAc...) asparagine" evidence="3">
    <location>
        <position position="587"/>
    </location>
</feature>
<feature type="disulfide bond" evidence="1">
    <location>
        <begin position="157"/>
        <end position="599"/>
    </location>
</feature>
<feature type="disulfide bond" evidence="1">
    <location>
        <begin position="235"/>
        <end position="286"/>
    </location>
</feature>
<feature type="disulfide bond" evidence="1">
    <location>
        <begin position="272"/>
        <end position="298"/>
    </location>
</feature>
<feature type="disulfide bond" evidence="1">
    <location>
        <begin position="393"/>
        <end position="506"/>
    </location>
</feature>
<feature type="disulfide bond" evidence="1">
    <location>
        <begin position="397"/>
        <end position="568"/>
    </location>
</feature>
<feature type="disulfide bond" evidence="1">
    <location>
        <begin position="469"/>
        <end position="491"/>
    </location>
</feature>
<feature type="disulfide bond" description="Interchain" evidence="1">
    <location>
        <position position="531"/>
    </location>
</feature>
<feature type="disulfide bond" description="Interchain" evidence="1">
    <location>
        <position position="533"/>
    </location>
</feature>
<gene>
    <name type="primary">Dbh</name>
</gene>
<sequence length="620" mass="69875">MQPHLSHQPCWSLPSPSVREAASMYGTAVAIFLVILVAALQGSEPPESPFPYHIPLDPEGTLELSWNVSYDQEIIHFQLQVQGPRAGVLFGMSDRGEMENADLVMLWTDGDRTYFADAWSDQKGQIHLDTHQDYQLLQAQRVSNSLSLLFKRPFVTCDPKDYVIEDDTVHLVYGILEEPFQSLEAINTSGLHTGLQQVQLLKPEVSTPAMPADVQTMDIRAPDVLIPSTETTYWCYITELPLHFPRHHIIMYEAIVTEGNEALVHHMEVFQCTNESEAFPMFNGPCDSKMKPDRLNYCRHVLAAWALGAKAFYYPEEAGVPLGSSGSSRFLRLEVHYHNPRNIQGRRDSSGIRLHYTASLRPNEAGIMELGLVYTPLMAIPPQETTFVLTGYCTDRCTQMALPKSGIRIFASQLHTHLTGRKVITVLARDGQQREVVNRDNHYSPHFQEIRMLKNAVTVHQGDVLITSCTYNTENRTMATVGGFGILEEMCVNYVHYYPKTELELCKSAVDDGFLQKYFHIVNRFGNEEVCTCPQASVPQQFASVPWNSFNRDMLKALYNYAPISVHCNKTSAVRFPGNWNLQPLPNITSAVEEPDPRCPIRQTRGPAGPFVVITHGGRH</sequence>
<comment type="function">
    <text evidence="1">Catalyzes the hydroxylation of dopamine to noradrenaline (also known as norepinephrine), and is thus vital for regulation of these neurotransmitters.</text>
</comment>
<comment type="catalytic activity">
    <reaction evidence="1">
        <text>dopamine + 2 L-ascorbate + O2 = (R)-noradrenaline + 2 monodehydro-L-ascorbate radical + H2O</text>
        <dbReference type="Rhea" id="RHEA:19117"/>
        <dbReference type="ChEBI" id="CHEBI:15377"/>
        <dbReference type="ChEBI" id="CHEBI:15379"/>
        <dbReference type="ChEBI" id="CHEBI:38290"/>
        <dbReference type="ChEBI" id="CHEBI:59513"/>
        <dbReference type="ChEBI" id="CHEBI:59905"/>
        <dbReference type="ChEBI" id="CHEBI:72587"/>
        <dbReference type="EC" id="1.14.17.1"/>
    </reaction>
    <physiologicalReaction direction="left-to-right" evidence="1">
        <dbReference type="Rhea" id="RHEA:19118"/>
    </physiologicalReaction>
</comment>
<comment type="cofactor">
    <cofactor evidence="1">
        <name>Cu(2+)</name>
        <dbReference type="ChEBI" id="CHEBI:29036"/>
    </cofactor>
    <text evidence="1">Binds 2 copper ions per subunit.</text>
</comment>
<comment type="pathway">
    <text evidence="1">Catecholamine biosynthesis; (R)-noradrenaline biosynthesis; (R)-noradrenaline from dopamine: step 1/1.</text>
</comment>
<comment type="subunit">
    <text evidence="1">Homotetramer; composed of two disulfide-linked dimers.</text>
</comment>
<comment type="subcellular location">
    <molecule>Soluble dopamine beta-hydroxylase</molecule>
    <subcellularLocation>
        <location evidence="1">Cytoplasmic vesicle</location>
        <location evidence="1">Secretory vesicle lumen</location>
    </subcellularLocation>
    <subcellularLocation>
        <location evidence="1">Cytoplasmic vesicle</location>
        <location evidence="1">Secretory vesicle</location>
        <location evidence="1">Chromaffin granule lumen</location>
    </subcellularLocation>
    <subcellularLocation>
        <location evidence="1">Secreted</location>
    </subcellularLocation>
</comment>
<comment type="subcellular location">
    <subcellularLocation>
        <location evidence="1">Cytoplasmic vesicle</location>
        <location evidence="1">Secretory vesicle membrane</location>
        <topology evidence="1">Single-pass type II membrane protein</topology>
    </subcellularLocation>
    <subcellularLocation>
        <location evidence="6">Cytoplasmic vesicle</location>
        <location evidence="6">Secretory vesicle</location>
        <location evidence="6">Chromaffin granule membrane</location>
        <topology evidence="1">Single-pass type II membrane protein</topology>
    </subcellularLocation>
</comment>
<comment type="tissue specificity">
    <text>Chromaffin granules of the adrenal medulla and synaptic vesicles of the sympathetic nervous system.</text>
</comment>
<comment type="PTM">
    <text evidence="2">Proteolytic cleavage after the membrane-anchor leads to the release of the soluble form.</text>
</comment>
<comment type="PTM">
    <text evidence="1">N-glycosylated.</text>
</comment>
<comment type="similarity">
    <text evidence="5">Belongs to the copper type II ascorbate-dependent monooxygenase family.</text>
</comment>
<organism>
    <name type="scientific">Rattus norvegicus</name>
    <name type="common">Rat</name>
    <dbReference type="NCBI Taxonomy" id="10116"/>
    <lineage>
        <taxon>Eukaryota</taxon>
        <taxon>Metazoa</taxon>
        <taxon>Chordata</taxon>
        <taxon>Craniata</taxon>
        <taxon>Vertebrata</taxon>
        <taxon>Euteleostomi</taxon>
        <taxon>Mammalia</taxon>
        <taxon>Eutheria</taxon>
        <taxon>Euarchontoglires</taxon>
        <taxon>Glires</taxon>
        <taxon>Rodentia</taxon>
        <taxon>Myomorpha</taxon>
        <taxon>Muroidea</taxon>
        <taxon>Muridae</taxon>
        <taxon>Murinae</taxon>
        <taxon>Rattus</taxon>
    </lineage>
</organism>
<reference key="1">
    <citation type="journal article" date="1990" name="J. Neurosci. Res.">
        <title>Rat dopamine beta-hydroxylase: molecular cloning and characterization of the cDNA and regulation of the mRNA by reserpine.</title>
        <authorList>
            <person name="McMahon A."/>
            <person name="Geertman R."/>
            <person name="Sabban E.L."/>
        </authorList>
    </citation>
    <scope>NUCLEOTIDE SEQUENCE [MRNA]</scope>
</reference>
<reference key="2">
    <citation type="journal article" date="2001" name="J. Biol. Chem.">
        <title>Dopamine beta-monooxygenase signal/anchor sequence alters trafficking of peptidylglycine alpha-hydroxylating monooxygenase.</title>
        <authorList>
            <person name="Oyarce A.M."/>
            <person name="Steveson T.C."/>
            <person name="Jin L."/>
            <person name="Eipper B.A."/>
        </authorList>
    </citation>
    <scope>SUBCELLULAR LOCATION</scope>
</reference>
<accession>Q05754</accession>
<name>DOPO_RAT</name>
<proteinExistence type="evidence at protein level"/>
<protein>
    <recommendedName>
        <fullName>Dopamine beta-hydroxylase</fullName>
        <ecNumber evidence="1">1.14.17.1</ecNumber>
    </recommendedName>
    <alternativeName>
        <fullName>Dopamine beta-monooxygenase</fullName>
    </alternativeName>
    <component>
        <recommendedName>
            <fullName>Soluble dopamine beta-hydroxylase</fullName>
        </recommendedName>
    </component>
</protein>
<dbReference type="EC" id="1.14.17.1" evidence="1"/>
<dbReference type="EMBL" id="L12407">
    <property type="protein sequence ID" value="AAA41091.1"/>
    <property type="molecule type" value="mRNA"/>
</dbReference>
<dbReference type="PIR" id="A61086">
    <property type="entry name" value="A61086"/>
</dbReference>
<dbReference type="RefSeq" id="NP_037290.2">
    <property type="nucleotide sequence ID" value="NM_013158.2"/>
</dbReference>
<dbReference type="PDB" id="1ZHB">
    <property type="method" value="X-ray"/>
    <property type="resolution" value="2.70 A"/>
    <property type="chains" value="C/F/I/L=556-564"/>
</dbReference>
<dbReference type="PDBsum" id="1ZHB"/>
<dbReference type="SMR" id="Q05754"/>
<dbReference type="FunCoup" id="Q05754">
    <property type="interactions" value="31"/>
</dbReference>
<dbReference type="STRING" id="10116.ENSRNOP00000057915"/>
<dbReference type="BindingDB" id="Q05754"/>
<dbReference type="ChEMBL" id="CHEMBL2992"/>
<dbReference type="GlyCosmos" id="Q05754">
    <property type="glycosylation" value="6 sites, No reported glycans"/>
</dbReference>
<dbReference type="GlyGen" id="Q05754">
    <property type="glycosylation" value="7 sites"/>
</dbReference>
<dbReference type="PhosphoSitePlus" id="Q05754"/>
<dbReference type="SwissPalm" id="Q05754"/>
<dbReference type="PaxDb" id="10116-ENSRNOP00000057915"/>
<dbReference type="GeneID" id="25699"/>
<dbReference type="KEGG" id="rno:25699"/>
<dbReference type="UCSC" id="RGD:2489">
    <property type="organism name" value="rat"/>
</dbReference>
<dbReference type="AGR" id="RGD:2489"/>
<dbReference type="CTD" id="1621"/>
<dbReference type="RGD" id="2489">
    <property type="gene designation" value="Dbh"/>
</dbReference>
<dbReference type="eggNOG" id="KOG3568">
    <property type="taxonomic scope" value="Eukaryota"/>
</dbReference>
<dbReference type="InParanoid" id="Q05754"/>
<dbReference type="OrthoDB" id="6508104at2759"/>
<dbReference type="PhylomeDB" id="Q05754"/>
<dbReference type="BRENDA" id="1.14.17.1">
    <property type="organism ID" value="5301"/>
</dbReference>
<dbReference type="Reactome" id="R-RNO-209905">
    <property type="pathway name" value="Catecholamine biosynthesis"/>
</dbReference>
<dbReference type="UniPathway" id="UPA00748">
    <property type="reaction ID" value="UER00735"/>
</dbReference>
<dbReference type="EvolutionaryTrace" id="Q05754"/>
<dbReference type="PRO" id="PR:Q05754"/>
<dbReference type="Proteomes" id="UP000002494">
    <property type="component" value="Unplaced"/>
</dbReference>
<dbReference type="GO" id="GO:0045177">
    <property type="term" value="C:apical part of cell"/>
    <property type="evidence" value="ECO:0000314"/>
    <property type="project" value="RGD"/>
</dbReference>
<dbReference type="GO" id="GO:0030424">
    <property type="term" value="C:axon"/>
    <property type="evidence" value="ECO:0000314"/>
    <property type="project" value="RGD"/>
</dbReference>
<dbReference type="GO" id="GO:0034466">
    <property type="term" value="C:chromaffin granule lumen"/>
    <property type="evidence" value="ECO:0007669"/>
    <property type="project" value="UniProtKB-SubCell"/>
</dbReference>
<dbReference type="GO" id="GO:0042584">
    <property type="term" value="C:chromaffin granule membrane"/>
    <property type="evidence" value="ECO:0007669"/>
    <property type="project" value="UniProtKB-SubCell"/>
</dbReference>
<dbReference type="GO" id="GO:0030425">
    <property type="term" value="C:dendrite"/>
    <property type="evidence" value="ECO:0000314"/>
    <property type="project" value="RGD"/>
</dbReference>
<dbReference type="GO" id="GO:0005615">
    <property type="term" value="C:extracellular space"/>
    <property type="evidence" value="ECO:0000250"/>
    <property type="project" value="UniProtKB"/>
</dbReference>
<dbReference type="GO" id="GO:0043025">
    <property type="term" value="C:neuronal cell body"/>
    <property type="evidence" value="ECO:0000314"/>
    <property type="project" value="RGD"/>
</dbReference>
<dbReference type="GO" id="GO:0034774">
    <property type="term" value="C:secretory granule lumen"/>
    <property type="evidence" value="ECO:0000250"/>
    <property type="project" value="UniProtKB"/>
</dbReference>
<dbReference type="GO" id="GO:0030667">
    <property type="term" value="C:secretory granule membrane"/>
    <property type="evidence" value="ECO:0000250"/>
    <property type="project" value="UniProtKB"/>
</dbReference>
<dbReference type="GO" id="GO:0043195">
    <property type="term" value="C:terminal bouton"/>
    <property type="evidence" value="ECO:0000314"/>
    <property type="project" value="RGD"/>
</dbReference>
<dbReference type="GO" id="GO:0030658">
    <property type="term" value="C:transport vesicle membrane"/>
    <property type="evidence" value="ECO:0007669"/>
    <property type="project" value="UniProtKB-SubCell"/>
</dbReference>
<dbReference type="GO" id="GO:0043196">
    <property type="term" value="C:varicosity"/>
    <property type="evidence" value="ECO:0000314"/>
    <property type="project" value="RGD"/>
</dbReference>
<dbReference type="GO" id="GO:0005507">
    <property type="term" value="F:copper ion binding"/>
    <property type="evidence" value="ECO:0000315"/>
    <property type="project" value="RGD"/>
</dbReference>
<dbReference type="GO" id="GO:0004500">
    <property type="term" value="F:dopamine beta-monooxygenase activity"/>
    <property type="evidence" value="ECO:0000314"/>
    <property type="project" value="RGD"/>
</dbReference>
<dbReference type="GO" id="GO:0031418">
    <property type="term" value="F:L-ascorbic acid binding"/>
    <property type="evidence" value="ECO:0007669"/>
    <property type="project" value="UniProtKB-KW"/>
</dbReference>
<dbReference type="GO" id="GO:0008306">
    <property type="term" value="P:associative learning"/>
    <property type="evidence" value="ECO:0000266"/>
    <property type="project" value="RGD"/>
</dbReference>
<dbReference type="GO" id="GO:0048149">
    <property type="term" value="P:behavioral response to ethanol"/>
    <property type="evidence" value="ECO:0000266"/>
    <property type="project" value="RGD"/>
</dbReference>
<dbReference type="GO" id="GO:0001974">
    <property type="term" value="P:blood vessel remodeling"/>
    <property type="evidence" value="ECO:0000266"/>
    <property type="project" value="RGD"/>
</dbReference>
<dbReference type="GO" id="GO:0060348">
    <property type="term" value="P:bone development"/>
    <property type="evidence" value="ECO:0000270"/>
    <property type="project" value="RGD"/>
</dbReference>
<dbReference type="GO" id="GO:0006584">
    <property type="term" value="P:catecholamine metabolic process"/>
    <property type="evidence" value="ECO:0000305"/>
    <property type="project" value="RGD"/>
</dbReference>
<dbReference type="GO" id="GO:0071287">
    <property type="term" value="P:cellular response to manganese ion"/>
    <property type="evidence" value="ECO:0000270"/>
    <property type="project" value="RGD"/>
</dbReference>
<dbReference type="GO" id="GO:0071316">
    <property type="term" value="P:cellular response to nicotine"/>
    <property type="evidence" value="ECO:0000270"/>
    <property type="project" value="RGD"/>
</dbReference>
<dbReference type="GO" id="GO:0042420">
    <property type="term" value="P:dopamine catabolic process"/>
    <property type="evidence" value="ECO:0000250"/>
    <property type="project" value="UniProtKB"/>
</dbReference>
<dbReference type="GO" id="GO:0042596">
    <property type="term" value="P:fear response"/>
    <property type="evidence" value="ECO:0000266"/>
    <property type="project" value="RGD"/>
</dbReference>
<dbReference type="GO" id="GO:0042593">
    <property type="term" value="P:glucose homeostasis"/>
    <property type="evidence" value="ECO:0000266"/>
    <property type="project" value="RGD"/>
</dbReference>
<dbReference type="GO" id="GO:0042309">
    <property type="term" value="P:homoiothermy"/>
    <property type="evidence" value="ECO:0000266"/>
    <property type="project" value="RGD"/>
</dbReference>
<dbReference type="GO" id="GO:0002443">
    <property type="term" value="P:leukocyte mediated immunity"/>
    <property type="evidence" value="ECO:0000266"/>
    <property type="project" value="RGD"/>
</dbReference>
<dbReference type="GO" id="GO:0050900">
    <property type="term" value="P:leukocyte migration"/>
    <property type="evidence" value="ECO:0000266"/>
    <property type="project" value="RGD"/>
</dbReference>
<dbReference type="GO" id="GO:0007626">
    <property type="term" value="P:locomotory behavior"/>
    <property type="evidence" value="ECO:0000266"/>
    <property type="project" value="RGD"/>
</dbReference>
<dbReference type="GO" id="GO:0042711">
    <property type="term" value="P:maternal behavior"/>
    <property type="evidence" value="ECO:0000266"/>
    <property type="project" value="RGD"/>
</dbReference>
<dbReference type="GO" id="GO:0007613">
    <property type="term" value="P:memory"/>
    <property type="evidence" value="ECO:0000266"/>
    <property type="project" value="RGD"/>
</dbReference>
<dbReference type="GO" id="GO:0042421">
    <property type="term" value="P:norepinephrine biosynthetic process"/>
    <property type="evidence" value="ECO:0000315"/>
    <property type="project" value="RGD"/>
</dbReference>
<dbReference type="GO" id="GO:0006589">
    <property type="term" value="P:octopamine biosynthetic process"/>
    <property type="evidence" value="ECO:0000318"/>
    <property type="project" value="GO_Central"/>
</dbReference>
<dbReference type="GO" id="GO:0046333">
    <property type="term" value="P:octopamine metabolic process"/>
    <property type="evidence" value="ECO:0000315"/>
    <property type="project" value="RGD"/>
</dbReference>
<dbReference type="GO" id="GO:0120162">
    <property type="term" value="P:positive regulation of cold-induced thermogenesis"/>
    <property type="evidence" value="ECO:0000250"/>
    <property type="project" value="YuBioLab"/>
</dbReference>
<dbReference type="GO" id="GO:0045907">
    <property type="term" value="P:positive regulation of vasoconstriction"/>
    <property type="evidence" value="ECO:0000266"/>
    <property type="project" value="RGD"/>
</dbReference>
<dbReference type="GO" id="GO:2001236">
    <property type="term" value="P:regulation of extrinsic apoptotic signaling pathway"/>
    <property type="evidence" value="ECO:0000266"/>
    <property type="project" value="RGD"/>
</dbReference>
<dbReference type="GO" id="GO:1904705">
    <property type="term" value="P:regulation of vascular associated smooth muscle cell proliferation"/>
    <property type="evidence" value="ECO:0000266"/>
    <property type="project" value="RGD"/>
</dbReference>
<dbReference type="GO" id="GO:1905562">
    <property type="term" value="P:regulation of vascular endothelial cell proliferation"/>
    <property type="evidence" value="ECO:0000266"/>
    <property type="project" value="RGD"/>
</dbReference>
<dbReference type="GO" id="GO:0001975">
    <property type="term" value="P:response to amphetamine"/>
    <property type="evidence" value="ECO:0000266"/>
    <property type="project" value="RGD"/>
</dbReference>
<dbReference type="GO" id="GO:0046688">
    <property type="term" value="P:response to copper ion"/>
    <property type="evidence" value="ECO:0000270"/>
    <property type="project" value="RGD"/>
</dbReference>
<dbReference type="GO" id="GO:0032355">
    <property type="term" value="P:response to estradiol"/>
    <property type="evidence" value="ECO:0000270"/>
    <property type="project" value="RGD"/>
</dbReference>
<dbReference type="GO" id="GO:0045471">
    <property type="term" value="P:response to ethanol"/>
    <property type="evidence" value="ECO:0000270"/>
    <property type="project" value="RGD"/>
</dbReference>
<dbReference type="GO" id="GO:0035902">
    <property type="term" value="P:response to immobilization stress"/>
    <property type="evidence" value="ECO:0000270"/>
    <property type="project" value="RGD"/>
</dbReference>
<dbReference type="GO" id="GO:0010039">
    <property type="term" value="P:response to iron ion"/>
    <property type="evidence" value="ECO:0000270"/>
    <property type="project" value="RGD"/>
</dbReference>
<dbReference type="GO" id="GO:0035900">
    <property type="term" value="P:response to isolation stress"/>
    <property type="evidence" value="ECO:0000270"/>
    <property type="project" value="RGD"/>
</dbReference>
<dbReference type="GO" id="GO:0010193">
    <property type="term" value="P:response to ozone"/>
    <property type="evidence" value="ECO:0000270"/>
    <property type="project" value="RGD"/>
</dbReference>
<dbReference type="GO" id="GO:0048265">
    <property type="term" value="P:response to pain"/>
    <property type="evidence" value="ECO:0000266"/>
    <property type="project" value="RGD"/>
</dbReference>
<dbReference type="GO" id="GO:0043434">
    <property type="term" value="P:response to peptide hormone"/>
    <property type="evidence" value="ECO:0000270"/>
    <property type="project" value="RGD"/>
</dbReference>
<dbReference type="GO" id="GO:0009410">
    <property type="term" value="P:response to xenobiotic stimulus"/>
    <property type="evidence" value="ECO:0000270"/>
    <property type="project" value="RGD"/>
</dbReference>
<dbReference type="GO" id="GO:0035176">
    <property type="term" value="P:social behavior"/>
    <property type="evidence" value="ECO:0000270"/>
    <property type="project" value="RGD"/>
</dbReference>
<dbReference type="GO" id="GO:0042310">
    <property type="term" value="P:vasoconstriction"/>
    <property type="evidence" value="ECO:0000266"/>
    <property type="project" value="RGD"/>
</dbReference>
<dbReference type="GO" id="GO:0008542">
    <property type="term" value="P:visual learning"/>
    <property type="evidence" value="ECO:0000266"/>
    <property type="project" value="RGD"/>
</dbReference>
<dbReference type="CDD" id="cd09631">
    <property type="entry name" value="DOMON_DOH"/>
    <property type="match status" value="1"/>
</dbReference>
<dbReference type="FunFam" id="2.60.120.310:FF:000003">
    <property type="entry name" value="Dopamine beta-hydroxylase"/>
    <property type="match status" value="1"/>
</dbReference>
<dbReference type="FunFam" id="2.60.120.230:FF:000001">
    <property type="entry name" value="Monooxygenase, DBH-like 1"/>
    <property type="match status" value="1"/>
</dbReference>
<dbReference type="Gene3D" id="2.60.120.230">
    <property type="match status" value="1"/>
</dbReference>
<dbReference type="Gene3D" id="2.60.120.310">
    <property type="entry name" value="Copper type II, ascorbate-dependent monooxygenase, N-terminal domain"/>
    <property type="match status" value="1"/>
</dbReference>
<dbReference type="InterPro" id="IPR014784">
    <property type="entry name" value="Cu2_ascorb_mOase-like_C"/>
</dbReference>
<dbReference type="InterPro" id="IPR020611">
    <property type="entry name" value="Cu2_ascorb_mOase_CS-1"/>
</dbReference>
<dbReference type="InterPro" id="IPR000323">
    <property type="entry name" value="Cu2_ascorb_mOase_N"/>
</dbReference>
<dbReference type="InterPro" id="IPR036939">
    <property type="entry name" value="Cu2_ascorb_mOase_N_sf"/>
</dbReference>
<dbReference type="InterPro" id="IPR024548">
    <property type="entry name" value="Cu2_monoox_C"/>
</dbReference>
<dbReference type="InterPro" id="IPR000945">
    <property type="entry name" value="DBH-like"/>
</dbReference>
<dbReference type="InterPro" id="IPR045266">
    <property type="entry name" value="DOH_DOMON"/>
</dbReference>
<dbReference type="InterPro" id="IPR005018">
    <property type="entry name" value="DOMON_domain"/>
</dbReference>
<dbReference type="InterPro" id="IPR008977">
    <property type="entry name" value="PHM/PNGase_F_dom_sf"/>
</dbReference>
<dbReference type="InterPro" id="IPR028460">
    <property type="entry name" value="Tbh/DBH"/>
</dbReference>
<dbReference type="PANTHER" id="PTHR10157">
    <property type="entry name" value="DOPAMINE BETA HYDROXYLASE RELATED"/>
    <property type="match status" value="1"/>
</dbReference>
<dbReference type="PANTHER" id="PTHR10157:SF29">
    <property type="entry name" value="DOPAMINE BETA-HYDROXYLASE"/>
    <property type="match status" value="1"/>
</dbReference>
<dbReference type="Pfam" id="PF03712">
    <property type="entry name" value="Cu2_monoox_C"/>
    <property type="match status" value="1"/>
</dbReference>
<dbReference type="Pfam" id="PF01082">
    <property type="entry name" value="Cu2_monooxygen"/>
    <property type="match status" value="1"/>
</dbReference>
<dbReference type="Pfam" id="PF03351">
    <property type="entry name" value="DOMON"/>
    <property type="match status" value="1"/>
</dbReference>
<dbReference type="PRINTS" id="PR00767">
    <property type="entry name" value="DBMONOXGNASE"/>
</dbReference>
<dbReference type="SMART" id="SM00664">
    <property type="entry name" value="DoH"/>
    <property type="match status" value="1"/>
</dbReference>
<dbReference type="SUPFAM" id="SSF49742">
    <property type="entry name" value="PHM/PNGase F"/>
    <property type="match status" value="2"/>
</dbReference>
<dbReference type="PROSITE" id="PS00084">
    <property type="entry name" value="CU2_MONOOXYGENASE_1"/>
    <property type="match status" value="1"/>
</dbReference>
<dbReference type="PROSITE" id="PS50836">
    <property type="entry name" value="DOMON"/>
    <property type="match status" value="1"/>
</dbReference>
<keyword id="KW-0002">3D-structure</keyword>
<keyword id="KW-0127">Catecholamine biosynthesis</keyword>
<keyword id="KW-0186">Copper</keyword>
<keyword id="KW-0968">Cytoplasmic vesicle</keyword>
<keyword id="KW-1015">Disulfide bond</keyword>
<keyword id="KW-0325">Glycoprotein</keyword>
<keyword id="KW-0472">Membrane</keyword>
<keyword id="KW-0479">Metal-binding</keyword>
<keyword id="KW-0503">Monooxygenase</keyword>
<keyword id="KW-0560">Oxidoreductase</keyword>
<keyword id="KW-0597">Phosphoprotein</keyword>
<keyword id="KW-1185">Reference proteome</keyword>
<keyword id="KW-0964">Secreted</keyword>
<keyword id="KW-0735">Signal-anchor</keyword>
<keyword id="KW-0812">Transmembrane</keyword>
<keyword id="KW-1133">Transmembrane helix</keyword>
<keyword id="KW-0847">Vitamin C</keyword>
<evidence type="ECO:0000250" key="1">
    <source>
        <dbReference type="UniProtKB" id="P09172"/>
    </source>
</evidence>
<evidence type="ECO:0000250" key="2">
    <source>
        <dbReference type="UniProtKB" id="P15101"/>
    </source>
</evidence>
<evidence type="ECO:0000255" key="3"/>
<evidence type="ECO:0000255" key="4">
    <source>
        <dbReference type="PROSITE-ProRule" id="PRU00246"/>
    </source>
</evidence>
<evidence type="ECO:0000305" key="5"/>
<evidence type="ECO:0000305" key="6">
    <source>
    </source>
</evidence>